<organism>
    <name type="scientific">Synechocystis sp. (strain ATCC 27184 / PCC 6803 / Kazusa)</name>
    <dbReference type="NCBI Taxonomy" id="1111708"/>
    <lineage>
        <taxon>Bacteria</taxon>
        <taxon>Bacillati</taxon>
        <taxon>Cyanobacteriota</taxon>
        <taxon>Cyanophyceae</taxon>
        <taxon>Synechococcales</taxon>
        <taxon>Merismopediaceae</taxon>
        <taxon>Synechocystis</taxon>
    </lineage>
</organism>
<accession>Q55653</accession>
<reference key="1">
    <citation type="journal article" date="1995" name="DNA Res.">
        <title>Sequence analysis of the genome of the unicellular cyanobacterium Synechocystis sp. strain PCC6803. I. Sequence features in the 1 Mb region from map positions 64% to 92% of the genome.</title>
        <authorList>
            <person name="Kaneko T."/>
            <person name="Tanaka A."/>
            <person name="Sato S."/>
            <person name="Kotani H."/>
            <person name="Sazuka T."/>
            <person name="Miyajima N."/>
            <person name="Sugiura M."/>
            <person name="Tabata S."/>
        </authorList>
    </citation>
    <scope>NUCLEOTIDE SEQUENCE [LARGE SCALE GENOMIC DNA]</scope>
    <source>
        <strain>ATCC 27184 / PCC 6803 / N-1</strain>
    </source>
</reference>
<reference key="2">
    <citation type="journal article" date="1996" name="DNA Res.">
        <title>Sequence analysis of the genome of the unicellular cyanobacterium Synechocystis sp. strain PCC6803. II. Sequence determination of the entire genome and assignment of potential protein-coding regions.</title>
        <authorList>
            <person name="Kaneko T."/>
            <person name="Sato S."/>
            <person name="Kotani H."/>
            <person name="Tanaka A."/>
            <person name="Asamizu E."/>
            <person name="Nakamura Y."/>
            <person name="Miyajima N."/>
            <person name="Hirosawa M."/>
            <person name="Sugiura M."/>
            <person name="Sasamoto S."/>
            <person name="Kimura T."/>
            <person name="Hosouchi T."/>
            <person name="Matsuno A."/>
            <person name="Muraki A."/>
            <person name="Nakazaki N."/>
            <person name="Naruo K."/>
            <person name="Okumura S."/>
            <person name="Shimpo S."/>
            <person name="Takeuchi C."/>
            <person name="Wada T."/>
            <person name="Watanabe A."/>
            <person name="Yamada M."/>
            <person name="Yasuda M."/>
            <person name="Tabata S."/>
        </authorList>
    </citation>
    <scope>NUCLEOTIDE SEQUENCE [LARGE SCALE GENOMIC DNA]</scope>
    <source>
        <strain>ATCC 27184 / PCC 6803 / Kazusa</strain>
    </source>
</reference>
<proteinExistence type="inferred from homology"/>
<keyword id="KW-0030">Aminoacyl-tRNA synthetase</keyword>
<keyword id="KW-0067">ATP-binding</keyword>
<keyword id="KW-0963">Cytoplasm</keyword>
<keyword id="KW-0436">Ligase</keyword>
<keyword id="KW-0547">Nucleotide-binding</keyword>
<keyword id="KW-0648">Protein biosynthesis</keyword>
<keyword id="KW-1185">Reference proteome</keyword>
<feature type="chain" id="PRO_0000136279" description="Histidine--tRNA ligase">
    <location>
        <begin position="1"/>
        <end position="447"/>
    </location>
</feature>
<sequence length="447" mass="49172">MGAIQAIRGTRDILPPETNYWQWVEAIAKSILDRALYQEIRTPIFEQTSLFERGIGEATDVVGKEMYSFTDRGDRPITLRPEGTAGVVRAYIEQNLQAAGGVQRLWYTGPMFRYERPQAGRQRQFHQLGVEVLGSADPRADVEVIALGTDILKALGLSNLSLALNSVGNGGDRQRYREALIAYLTPFKAELDPDSQDRLERNPLRILDSKAKRTQEIVQDAPSILDHLGVDSQRHFDQVQQLLTNLGIAYQLTPTLVRGLDYYTHTAFEIQSSDLGAQATVCGGGRYDGLVAELGGPVTPAVGWAMGLERLIILLQQMATPPAPSPDLYLISKGEKAEPQALILAQKLRNQGLAVALDLSASAFGKQFKRADKSGAIACLVLGDGEIATGTVQLKWLADKAQETLQLQDLMGNITELKQRLAGHREKYPHLTSNFSVTCHDPMDNLV</sequence>
<dbReference type="EC" id="6.1.1.21"/>
<dbReference type="EMBL" id="BA000022">
    <property type="protein sequence ID" value="BAA10173.1"/>
    <property type="molecule type" value="Genomic_DNA"/>
</dbReference>
<dbReference type="PIR" id="S76321">
    <property type="entry name" value="S76321"/>
</dbReference>
<dbReference type="SMR" id="Q55653"/>
<dbReference type="FunCoup" id="Q55653">
    <property type="interactions" value="462"/>
</dbReference>
<dbReference type="IntAct" id="Q55653">
    <property type="interactions" value="1"/>
</dbReference>
<dbReference type="STRING" id="1148.gene:10499670"/>
<dbReference type="PaxDb" id="1148-1001546"/>
<dbReference type="EnsemblBacteria" id="BAA10173">
    <property type="protein sequence ID" value="BAA10173"/>
    <property type="gene ID" value="BAA10173"/>
</dbReference>
<dbReference type="KEGG" id="syn:slr0357"/>
<dbReference type="eggNOG" id="COG0124">
    <property type="taxonomic scope" value="Bacteria"/>
</dbReference>
<dbReference type="InParanoid" id="Q55653"/>
<dbReference type="PhylomeDB" id="Q55653"/>
<dbReference type="BRENDA" id="6.1.1.21">
    <property type="organism ID" value="382"/>
</dbReference>
<dbReference type="Proteomes" id="UP000001425">
    <property type="component" value="Chromosome"/>
</dbReference>
<dbReference type="GO" id="GO:0005737">
    <property type="term" value="C:cytoplasm"/>
    <property type="evidence" value="ECO:0007669"/>
    <property type="project" value="UniProtKB-SubCell"/>
</dbReference>
<dbReference type="GO" id="GO:0005524">
    <property type="term" value="F:ATP binding"/>
    <property type="evidence" value="ECO:0007669"/>
    <property type="project" value="UniProtKB-UniRule"/>
</dbReference>
<dbReference type="GO" id="GO:0004821">
    <property type="term" value="F:histidine-tRNA ligase activity"/>
    <property type="evidence" value="ECO:0000318"/>
    <property type="project" value="GO_Central"/>
</dbReference>
<dbReference type="GO" id="GO:0006427">
    <property type="term" value="P:histidyl-tRNA aminoacylation"/>
    <property type="evidence" value="ECO:0000318"/>
    <property type="project" value="GO_Central"/>
</dbReference>
<dbReference type="CDD" id="cd00773">
    <property type="entry name" value="HisRS-like_core"/>
    <property type="match status" value="1"/>
</dbReference>
<dbReference type="CDD" id="cd00859">
    <property type="entry name" value="HisRS_anticodon"/>
    <property type="match status" value="1"/>
</dbReference>
<dbReference type="FunFam" id="3.30.930.10:FF:000005">
    <property type="entry name" value="Histidine--tRNA ligase"/>
    <property type="match status" value="1"/>
</dbReference>
<dbReference type="Gene3D" id="3.40.50.800">
    <property type="entry name" value="Anticodon-binding domain"/>
    <property type="match status" value="1"/>
</dbReference>
<dbReference type="Gene3D" id="3.30.930.10">
    <property type="entry name" value="Bira Bifunctional Protein, Domain 2"/>
    <property type="match status" value="1"/>
</dbReference>
<dbReference type="HAMAP" id="MF_00127">
    <property type="entry name" value="His_tRNA_synth"/>
    <property type="match status" value="1"/>
</dbReference>
<dbReference type="InterPro" id="IPR006195">
    <property type="entry name" value="aa-tRNA-synth_II"/>
</dbReference>
<dbReference type="InterPro" id="IPR045864">
    <property type="entry name" value="aa-tRNA-synth_II/BPL/LPL"/>
</dbReference>
<dbReference type="InterPro" id="IPR004154">
    <property type="entry name" value="Anticodon-bd"/>
</dbReference>
<dbReference type="InterPro" id="IPR036621">
    <property type="entry name" value="Anticodon-bd_dom_sf"/>
</dbReference>
<dbReference type="InterPro" id="IPR015807">
    <property type="entry name" value="His-tRNA-ligase"/>
</dbReference>
<dbReference type="InterPro" id="IPR041715">
    <property type="entry name" value="HisRS-like_core"/>
</dbReference>
<dbReference type="InterPro" id="IPR004516">
    <property type="entry name" value="HisRS/HisZ"/>
</dbReference>
<dbReference type="InterPro" id="IPR033656">
    <property type="entry name" value="HisRS_anticodon"/>
</dbReference>
<dbReference type="NCBIfam" id="TIGR00442">
    <property type="entry name" value="hisS"/>
    <property type="match status" value="1"/>
</dbReference>
<dbReference type="PANTHER" id="PTHR43707:SF1">
    <property type="entry name" value="HISTIDINE--TRNA LIGASE, MITOCHONDRIAL-RELATED"/>
    <property type="match status" value="1"/>
</dbReference>
<dbReference type="PANTHER" id="PTHR43707">
    <property type="entry name" value="HISTIDYL-TRNA SYNTHETASE"/>
    <property type="match status" value="1"/>
</dbReference>
<dbReference type="Pfam" id="PF03129">
    <property type="entry name" value="HGTP_anticodon"/>
    <property type="match status" value="1"/>
</dbReference>
<dbReference type="Pfam" id="PF13393">
    <property type="entry name" value="tRNA-synt_His"/>
    <property type="match status" value="1"/>
</dbReference>
<dbReference type="PIRSF" id="PIRSF001549">
    <property type="entry name" value="His-tRNA_synth"/>
    <property type="match status" value="1"/>
</dbReference>
<dbReference type="SUPFAM" id="SSF52954">
    <property type="entry name" value="Class II aaRS ABD-related"/>
    <property type="match status" value="1"/>
</dbReference>
<dbReference type="SUPFAM" id="SSF55681">
    <property type="entry name" value="Class II aaRS and biotin synthetases"/>
    <property type="match status" value="1"/>
</dbReference>
<dbReference type="PROSITE" id="PS50862">
    <property type="entry name" value="AA_TRNA_LIGASE_II"/>
    <property type="match status" value="1"/>
</dbReference>
<comment type="catalytic activity">
    <reaction>
        <text>tRNA(His) + L-histidine + ATP = L-histidyl-tRNA(His) + AMP + diphosphate + H(+)</text>
        <dbReference type="Rhea" id="RHEA:17313"/>
        <dbReference type="Rhea" id="RHEA-COMP:9665"/>
        <dbReference type="Rhea" id="RHEA-COMP:9689"/>
        <dbReference type="ChEBI" id="CHEBI:15378"/>
        <dbReference type="ChEBI" id="CHEBI:30616"/>
        <dbReference type="ChEBI" id="CHEBI:33019"/>
        <dbReference type="ChEBI" id="CHEBI:57595"/>
        <dbReference type="ChEBI" id="CHEBI:78442"/>
        <dbReference type="ChEBI" id="CHEBI:78527"/>
        <dbReference type="ChEBI" id="CHEBI:456215"/>
        <dbReference type="EC" id="6.1.1.21"/>
    </reaction>
</comment>
<comment type="subunit">
    <text evidence="1">Homodimer.</text>
</comment>
<comment type="subcellular location">
    <subcellularLocation>
        <location evidence="1">Cytoplasm</location>
    </subcellularLocation>
</comment>
<comment type="similarity">
    <text evidence="2">Belongs to the class-II aminoacyl-tRNA synthetase family.</text>
</comment>
<gene>
    <name type="primary">hisS</name>
    <name type="ordered locus">slr0357</name>
</gene>
<evidence type="ECO:0000250" key="1"/>
<evidence type="ECO:0000305" key="2"/>
<name>SYH_SYNY3</name>
<protein>
    <recommendedName>
        <fullName>Histidine--tRNA ligase</fullName>
        <ecNumber>6.1.1.21</ecNumber>
    </recommendedName>
    <alternativeName>
        <fullName>Histidyl-tRNA synthetase</fullName>
        <shortName>HisRS</shortName>
    </alternativeName>
</protein>